<proteinExistence type="inferred from homology"/>
<feature type="chain" id="PRO_0000325129" description="Shikimate dehydrogenase (NADP(+))">
    <location>
        <begin position="1"/>
        <end position="265"/>
    </location>
</feature>
<feature type="active site" description="Proton acceptor" evidence="1">
    <location>
        <position position="66"/>
    </location>
</feature>
<feature type="binding site" evidence="1">
    <location>
        <begin position="15"/>
        <end position="17"/>
    </location>
    <ligand>
        <name>shikimate</name>
        <dbReference type="ChEBI" id="CHEBI:36208"/>
    </ligand>
</feature>
<feature type="binding site" evidence="1">
    <location>
        <position position="62"/>
    </location>
    <ligand>
        <name>shikimate</name>
        <dbReference type="ChEBI" id="CHEBI:36208"/>
    </ligand>
</feature>
<feature type="binding site" evidence="1">
    <location>
        <position position="87"/>
    </location>
    <ligand>
        <name>shikimate</name>
        <dbReference type="ChEBI" id="CHEBI:36208"/>
    </ligand>
</feature>
<feature type="binding site" evidence="1">
    <location>
        <position position="102"/>
    </location>
    <ligand>
        <name>shikimate</name>
        <dbReference type="ChEBI" id="CHEBI:36208"/>
    </ligand>
</feature>
<feature type="binding site" evidence="1">
    <location>
        <begin position="125"/>
        <end position="129"/>
    </location>
    <ligand>
        <name>NADP(+)</name>
        <dbReference type="ChEBI" id="CHEBI:58349"/>
    </ligand>
</feature>
<feature type="binding site" evidence="1">
    <location>
        <begin position="149"/>
        <end position="154"/>
    </location>
    <ligand>
        <name>NADP(+)</name>
        <dbReference type="ChEBI" id="CHEBI:58349"/>
    </ligand>
</feature>
<feature type="binding site" evidence="1">
    <location>
        <position position="209"/>
    </location>
    <ligand>
        <name>NADP(+)</name>
        <dbReference type="ChEBI" id="CHEBI:58349"/>
    </ligand>
</feature>
<feature type="binding site" evidence="1">
    <location>
        <position position="211"/>
    </location>
    <ligand>
        <name>shikimate</name>
        <dbReference type="ChEBI" id="CHEBI:36208"/>
    </ligand>
</feature>
<feature type="binding site" evidence="1">
    <location>
        <position position="233"/>
    </location>
    <ligand>
        <name>NADP(+)</name>
        <dbReference type="ChEBI" id="CHEBI:58349"/>
    </ligand>
</feature>
<gene>
    <name evidence="1" type="primary">aroE</name>
    <name type="ordered locus">LPC_3094</name>
</gene>
<reference key="1">
    <citation type="submission" date="2006-11" db="EMBL/GenBank/DDBJ databases">
        <title>Identification and characterization of a new conjugation/ type IVA secretion system (trb/tra) of L. pneumophila Corby localized on a mobile genomic island.</title>
        <authorList>
            <person name="Gloeckner G."/>
            <person name="Albert-Weissenberger C."/>
            <person name="Weinmann E."/>
            <person name="Jacobi S."/>
            <person name="Schunder E."/>
            <person name="Steinert M."/>
            <person name="Buchrieser C."/>
            <person name="Hacker J."/>
            <person name="Heuner K."/>
        </authorList>
    </citation>
    <scope>NUCLEOTIDE SEQUENCE [LARGE SCALE GENOMIC DNA]</scope>
    <source>
        <strain>Corby</strain>
    </source>
</reference>
<protein>
    <recommendedName>
        <fullName evidence="1">Shikimate dehydrogenase (NADP(+))</fullName>
        <shortName evidence="1">SDH</shortName>
        <ecNumber evidence="1">1.1.1.25</ecNumber>
    </recommendedName>
</protein>
<dbReference type="EC" id="1.1.1.25" evidence="1"/>
<dbReference type="EMBL" id="CP000675">
    <property type="protein sequence ID" value="ABQ56981.1"/>
    <property type="molecule type" value="Genomic_DNA"/>
</dbReference>
<dbReference type="RefSeq" id="WP_011947694.1">
    <property type="nucleotide sequence ID" value="NZ_JAPMSS010000004.1"/>
</dbReference>
<dbReference type="SMR" id="A5IHY1"/>
<dbReference type="KEGG" id="lpc:LPC_3094"/>
<dbReference type="HOGENOM" id="CLU_044063_2_1_6"/>
<dbReference type="UniPathway" id="UPA00053">
    <property type="reaction ID" value="UER00087"/>
</dbReference>
<dbReference type="GO" id="GO:0005829">
    <property type="term" value="C:cytosol"/>
    <property type="evidence" value="ECO:0007669"/>
    <property type="project" value="TreeGrafter"/>
</dbReference>
<dbReference type="GO" id="GO:0050661">
    <property type="term" value="F:NADP binding"/>
    <property type="evidence" value="ECO:0007669"/>
    <property type="project" value="InterPro"/>
</dbReference>
<dbReference type="GO" id="GO:0004764">
    <property type="term" value="F:shikimate 3-dehydrogenase (NADP+) activity"/>
    <property type="evidence" value="ECO:0007669"/>
    <property type="project" value="UniProtKB-UniRule"/>
</dbReference>
<dbReference type="GO" id="GO:0008652">
    <property type="term" value="P:amino acid biosynthetic process"/>
    <property type="evidence" value="ECO:0007669"/>
    <property type="project" value="UniProtKB-KW"/>
</dbReference>
<dbReference type="GO" id="GO:0009073">
    <property type="term" value="P:aromatic amino acid family biosynthetic process"/>
    <property type="evidence" value="ECO:0007669"/>
    <property type="project" value="UniProtKB-KW"/>
</dbReference>
<dbReference type="GO" id="GO:0009423">
    <property type="term" value="P:chorismate biosynthetic process"/>
    <property type="evidence" value="ECO:0007669"/>
    <property type="project" value="UniProtKB-UniRule"/>
</dbReference>
<dbReference type="GO" id="GO:0019632">
    <property type="term" value="P:shikimate metabolic process"/>
    <property type="evidence" value="ECO:0007669"/>
    <property type="project" value="InterPro"/>
</dbReference>
<dbReference type="CDD" id="cd01065">
    <property type="entry name" value="NAD_bind_Shikimate_DH"/>
    <property type="match status" value="1"/>
</dbReference>
<dbReference type="FunFam" id="3.40.50.10860:FF:000006">
    <property type="entry name" value="Shikimate dehydrogenase (NADP(+))"/>
    <property type="match status" value="1"/>
</dbReference>
<dbReference type="Gene3D" id="3.40.50.10860">
    <property type="entry name" value="Leucine Dehydrogenase, chain A, domain 1"/>
    <property type="match status" value="1"/>
</dbReference>
<dbReference type="Gene3D" id="3.40.50.720">
    <property type="entry name" value="NAD(P)-binding Rossmann-like Domain"/>
    <property type="match status" value="1"/>
</dbReference>
<dbReference type="HAMAP" id="MF_00222">
    <property type="entry name" value="Shikimate_DH_AroE"/>
    <property type="match status" value="1"/>
</dbReference>
<dbReference type="InterPro" id="IPR046346">
    <property type="entry name" value="Aminoacid_DH-like_N_sf"/>
</dbReference>
<dbReference type="InterPro" id="IPR036291">
    <property type="entry name" value="NAD(P)-bd_dom_sf"/>
</dbReference>
<dbReference type="InterPro" id="IPR041121">
    <property type="entry name" value="SDH_C"/>
</dbReference>
<dbReference type="InterPro" id="IPR011342">
    <property type="entry name" value="Shikimate_DH"/>
</dbReference>
<dbReference type="InterPro" id="IPR013708">
    <property type="entry name" value="Shikimate_DH-bd_N"/>
</dbReference>
<dbReference type="InterPro" id="IPR022893">
    <property type="entry name" value="Shikimate_DH_fam"/>
</dbReference>
<dbReference type="InterPro" id="IPR006151">
    <property type="entry name" value="Shikm_DH/Glu-tRNA_Rdtase"/>
</dbReference>
<dbReference type="NCBIfam" id="TIGR00507">
    <property type="entry name" value="aroE"/>
    <property type="match status" value="1"/>
</dbReference>
<dbReference type="NCBIfam" id="NF001310">
    <property type="entry name" value="PRK00258.1-2"/>
    <property type="match status" value="1"/>
</dbReference>
<dbReference type="PANTHER" id="PTHR21089:SF1">
    <property type="entry name" value="BIFUNCTIONAL 3-DEHYDROQUINATE DEHYDRATASE_SHIKIMATE DEHYDROGENASE, CHLOROPLASTIC"/>
    <property type="match status" value="1"/>
</dbReference>
<dbReference type="PANTHER" id="PTHR21089">
    <property type="entry name" value="SHIKIMATE DEHYDROGENASE"/>
    <property type="match status" value="1"/>
</dbReference>
<dbReference type="Pfam" id="PF18317">
    <property type="entry name" value="SDH_C"/>
    <property type="match status" value="1"/>
</dbReference>
<dbReference type="Pfam" id="PF01488">
    <property type="entry name" value="Shikimate_DH"/>
    <property type="match status" value="1"/>
</dbReference>
<dbReference type="Pfam" id="PF08501">
    <property type="entry name" value="Shikimate_dh_N"/>
    <property type="match status" value="1"/>
</dbReference>
<dbReference type="SUPFAM" id="SSF53223">
    <property type="entry name" value="Aminoacid dehydrogenase-like, N-terminal domain"/>
    <property type="match status" value="1"/>
</dbReference>
<dbReference type="SUPFAM" id="SSF51735">
    <property type="entry name" value="NAD(P)-binding Rossmann-fold domains"/>
    <property type="match status" value="1"/>
</dbReference>
<evidence type="ECO:0000255" key="1">
    <source>
        <dbReference type="HAMAP-Rule" id="MF_00222"/>
    </source>
</evidence>
<comment type="function">
    <text evidence="1">Involved in the biosynthesis of the chorismate, which leads to the biosynthesis of aromatic amino acids. Catalyzes the reversible NADPH linked reduction of 3-dehydroshikimate (DHSA) to yield shikimate (SA).</text>
</comment>
<comment type="catalytic activity">
    <reaction evidence="1">
        <text>shikimate + NADP(+) = 3-dehydroshikimate + NADPH + H(+)</text>
        <dbReference type="Rhea" id="RHEA:17737"/>
        <dbReference type="ChEBI" id="CHEBI:15378"/>
        <dbReference type="ChEBI" id="CHEBI:16630"/>
        <dbReference type="ChEBI" id="CHEBI:36208"/>
        <dbReference type="ChEBI" id="CHEBI:57783"/>
        <dbReference type="ChEBI" id="CHEBI:58349"/>
        <dbReference type="EC" id="1.1.1.25"/>
    </reaction>
</comment>
<comment type="pathway">
    <text evidence="1">Metabolic intermediate biosynthesis; chorismate biosynthesis; chorismate from D-erythrose 4-phosphate and phosphoenolpyruvate: step 4/7.</text>
</comment>
<comment type="subunit">
    <text evidence="1">Homodimer.</text>
</comment>
<comment type="similarity">
    <text evidence="1">Belongs to the shikimate dehydrogenase family.</text>
</comment>
<keyword id="KW-0028">Amino-acid biosynthesis</keyword>
<keyword id="KW-0057">Aromatic amino acid biosynthesis</keyword>
<keyword id="KW-0521">NADP</keyword>
<keyword id="KW-0560">Oxidoreductase</keyword>
<organism>
    <name type="scientific">Legionella pneumophila (strain Corby)</name>
    <dbReference type="NCBI Taxonomy" id="400673"/>
    <lineage>
        <taxon>Bacteria</taxon>
        <taxon>Pseudomonadati</taxon>
        <taxon>Pseudomonadota</taxon>
        <taxon>Gammaproteobacteria</taxon>
        <taxon>Legionellales</taxon>
        <taxon>Legionellaceae</taxon>
        <taxon>Legionella</taxon>
    </lineage>
</organism>
<name>AROE_LEGPC</name>
<sequence>MLRRFAVIGNPIAHSLSPVIHQMFAQQTQIELIYEKILGDDVKFEQQISDFFIQYGNGLNVTLPYKKRAYELAKIRTQRCALAGVANTLWMEENQLHADNTDGIGLIRDLSRFLELKDKKILILGAGGAARGIIFPLLEAKPLKLIVANRTLEKAEELKRQFPQINVTSFAELPEFFDLIINATSASLSDQVIALPEEAFSHKPFCYDLAYNQKTSTAFVQYARNGGCEAVDGLGMLVEQAAEAFFIWNKVMPSTQKILEHLRSF</sequence>
<accession>A5IHY1</accession>